<name>Y146_MYCTO</name>
<reference key="1">
    <citation type="journal article" date="2002" name="J. Bacteriol.">
        <title>Whole-genome comparison of Mycobacterium tuberculosis clinical and laboratory strains.</title>
        <authorList>
            <person name="Fleischmann R.D."/>
            <person name="Alland D."/>
            <person name="Eisen J.A."/>
            <person name="Carpenter L."/>
            <person name="White O."/>
            <person name="Peterson J.D."/>
            <person name="DeBoy R.T."/>
            <person name="Dodson R.J."/>
            <person name="Gwinn M.L."/>
            <person name="Haft D.H."/>
            <person name="Hickey E.K."/>
            <person name="Kolonay J.F."/>
            <person name="Nelson W.C."/>
            <person name="Umayam L.A."/>
            <person name="Ermolaeva M.D."/>
            <person name="Salzberg S.L."/>
            <person name="Delcher A."/>
            <person name="Utterback T.R."/>
            <person name="Weidman J.F."/>
            <person name="Khouri H.M."/>
            <person name="Gill J."/>
            <person name="Mikula A."/>
            <person name="Bishai W."/>
            <person name="Jacobs W.R. Jr."/>
            <person name="Venter J.C."/>
            <person name="Fraser C.M."/>
        </authorList>
    </citation>
    <scope>NUCLEOTIDE SEQUENCE [LARGE SCALE GENOMIC DNA]</scope>
    <source>
        <strain>CDC 1551 / Oshkosh</strain>
    </source>
</reference>
<protein>
    <recommendedName>
        <fullName>Putative S-adenosyl-L-methionine-dependent methyltransferase MT0154</fullName>
        <ecNumber>2.1.1.-</ecNumber>
    </recommendedName>
</protein>
<sequence>MRTHDDTWDIKTSVGATAVMVAAARAVETDRPDPLIRDPYARLLVTNAGAGAIWEAMLDPTLVAKAAAIDAETAAIVAYLRSYQAVRTNFFDTYFASAVAAGIRQVVILASGLDSRAYRLDWPAGTIVYEIDQPKVLSYKSTTLAENGVTPSAGRREVPADLRQDWPAALRDAGFDPTARTAWLAEGLLMYLPAEAQDRLFTQVGAVSVAGSRIAAETAPVHGEERRAEMRARFKKVADVLGIEQTIDVQELVYHDQDRASVADWLTDHGWRARSQRAPDEMRRVGRWVEGVPMADDPTAFAEFVTAERL</sequence>
<feature type="chain" id="PRO_0000428529" description="Putative S-adenosyl-L-methionine-dependent methyltransferase MT0154">
    <location>
        <begin position="1"/>
        <end position="310"/>
    </location>
</feature>
<feature type="binding site" evidence="1">
    <location>
        <position position="132"/>
    </location>
    <ligand>
        <name>S-adenosyl-L-methionine</name>
        <dbReference type="ChEBI" id="CHEBI:59789"/>
    </ligand>
</feature>
<feature type="binding site" evidence="1">
    <location>
        <begin position="161"/>
        <end position="162"/>
    </location>
    <ligand>
        <name>S-adenosyl-L-methionine</name>
        <dbReference type="ChEBI" id="CHEBI:59789"/>
    </ligand>
</feature>
<accession>P9WFJ2</accession>
<accession>L0T5V3</accession>
<accession>P96823</accession>
<accession>Q7DAE0</accession>
<evidence type="ECO:0000250" key="1"/>
<evidence type="ECO:0000305" key="2"/>
<comment type="function">
    <text evidence="1">Exhibits S-adenosyl-L-methionine-dependent methyltransferase activity.</text>
</comment>
<comment type="similarity">
    <text evidence="2">Belongs to the UPF0677 family.</text>
</comment>
<comment type="sequence caution" evidence="2">
    <conflict type="erroneous initiation">
        <sequence resource="EMBL-CDS" id="AAK44378"/>
    </conflict>
</comment>
<dbReference type="EC" id="2.1.1.-"/>
<dbReference type="EMBL" id="AE000516">
    <property type="protein sequence ID" value="AAK44378.1"/>
    <property type="status" value="ALT_INIT"/>
    <property type="molecule type" value="Genomic_DNA"/>
</dbReference>
<dbReference type="PIR" id="E70617">
    <property type="entry name" value="E70617"/>
</dbReference>
<dbReference type="RefSeq" id="WP_003900814.1">
    <property type="nucleotide sequence ID" value="NZ_KK341227.1"/>
</dbReference>
<dbReference type="SMR" id="P9WFJ2"/>
<dbReference type="KEGG" id="mtc:MT0154"/>
<dbReference type="PATRIC" id="fig|83331.31.peg.166"/>
<dbReference type="HOGENOM" id="CLU_056160_2_1_11"/>
<dbReference type="Proteomes" id="UP000001020">
    <property type="component" value="Chromosome"/>
</dbReference>
<dbReference type="GO" id="GO:0008168">
    <property type="term" value="F:methyltransferase activity"/>
    <property type="evidence" value="ECO:0007669"/>
    <property type="project" value="UniProtKB-KW"/>
</dbReference>
<dbReference type="GO" id="GO:0032259">
    <property type="term" value="P:methylation"/>
    <property type="evidence" value="ECO:0007669"/>
    <property type="project" value="UniProtKB-KW"/>
</dbReference>
<dbReference type="FunFam" id="3.40.50.150:FF:000152">
    <property type="entry name" value="S-adenosyl-L-methionine-dependent methyltransferase"/>
    <property type="match status" value="1"/>
</dbReference>
<dbReference type="Gene3D" id="3.40.50.150">
    <property type="entry name" value="Vaccinia Virus protein VP39"/>
    <property type="match status" value="1"/>
</dbReference>
<dbReference type="InterPro" id="IPR007213">
    <property type="entry name" value="Ppm1/Ppm2/Tcmp"/>
</dbReference>
<dbReference type="InterPro" id="IPR029063">
    <property type="entry name" value="SAM-dependent_MTases_sf"/>
</dbReference>
<dbReference type="InterPro" id="IPR011610">
    <property type="entry name" value="SAM_mthyl_Trfase_ML2640-like"/>
</dbReference>
<dbReference type="NCBIfam" id="TIGR00027">
    <property type="entry name" value="mthyl_TIGR00027"/>
    <property type="match status" value="1"/>
</dbReference>
<dbReference type="PANTHER" id="PTHR43619">
    <property type="entry name" value="S-ADENOSYL-L-METHIONINE-DEPENDENT METHYLTRANSFERASE YKTD-RELATED"/>
    <property type="match status" value="1"/>
</dbReference>
<dbReference type="PANTHER" id="PTHR43619:SF2">
    <property type="entry name" value="S-ADENOSYL-L-METHIONINE-DEPENDENT METHYLTRANSFERASES SUPERFAMILY PROTEIN"/>
    <property type="match status" value="1"/>
</dbReference>
<dbReference type="Pfam" id="PF04072">
    <property type="entry name" value="LCM"/>
    <property type="match status" value="1"/>
</dbReference>
<dbReference type="SUPFAM" id="SSF53335">
    <property type="entry name" value="S-adenosyl-L-methionine-dependent methyltransferases"/>
    <property type="match status" value="1"/>
</dbReference>
<organism>
    <name type="scientific">Mycobacterium tuberculosis (strain CDC 1551 / Oshkosh)</name>
    <dbReference type="NCBI Taxonomy" id="83331"/>
    <lineage>
        <taxon>Bacteria</taxon>
        <taxon>Bacillati</taxon>
        <taxon>Actinomycetota</taxon>
        <taxon>Actinomycetes</taxon>
        <taxon>Mycobacteriales</taxon>
        <taxon>Mycobacteriaceae</taxon>
        <taxon>Mycobacterium</taxon>
        <taxon>Mycobacterium tuberculosis complex</taxon>
    </lineage>
</organism>
<keyword id="KW-0489">Methyltransferase</keyword>
<keyword id="KW-1185">Reference proteome</keyword>
<keyword id="KW-0949">S-adenosyl-L-methionine</keyword>
<keyword id="KW-0808">Transferase</keyword>
<proteinExistence type="inferred from homology"/>
<gene>
    <name type="ordered locus">MT0154</name>
</gene>